<evidence type="ECO:0000250" key="1">
    <source>
        <dbReference type="UniProtKB" id="D9PVP5"/>
    </source>
</evidence>
<evidence type="ECO:0000250" key="2">
    <source>
        <dbReference type="UniProtKB" id="O29370"/>
    </source>
</evidence>
<evidence type="ECO:0000305" key="3"/>
<comment type="function">
    <text evidence="1">Catalyzes the reduction of NADP(+) with F420H(2) via hydride transfer, and the reverse reaction, i.e. the reduction of F420 with NADPH. Probably functions in the regeneration of NADPH required in biosynthetic reactions.</text>
</comment>
<comment type="catalytic activity">
    <reaction evidence="1">
        <text>reduced coenzyme F420-(gamma-L-Glu)(n) + NADP(+) = oxidized coenzyme F420-(gamma-L-Glu)(n) + NADPH + 2 H(+)</text>
        <dbReference type="Rhea" id="RHEA:31363"/>
        <dbReference type="Rhea" id="RHEA-COMP:12939"/>
        <dbReference type="Rhea" id="RHEA-COMP:14378"/>
        <dbReference type="ChEBI" id="CHEBI:15378"/>
        <dbReference type="ChEBI" id="CHEBI:57783"/>
        <dbReference type="ChEBI" id="CHEBI:58349"/>
        <dbReference type="ChEBI" id="CHEBI:133980"/>
        <dbReference type="ChEBI" id="CHEBI:139511"/>
        <dbReference type="EC" id="1.5.1.40"/>
    </reaction>
</comment>
<comment type="similarity">
    <text evidence="3">Belongs to the F420-dependent NADP reductase family.</text>
</comment>
<accession>Q58896</accession>
<organism>
    <name type="scientific">Methanocaldococcus jannaschii (strain ATCC 43067 / DSM 2661 / JAL-1 / JCM 10045 / NBRC 100440)</name>
    <name type="common">Methanococcus jannaschii</name>
    <dbReference type="NCBI Taxonomy" id="243232"/>
    <lineage>
        <taxon>Archaea</taxon>
        <taxon>Methanobacteriati</taxon>
        <taxon>Methanobacteriota</taxon>
        <taxon>Methanomada group</taxon>
        <taxon>Methanococci</taxon>
        <taxon>Methanococcales</taxon>
        <taxon>Methanocaldococcaceae</taxon>
        <taxon>Methanocaldococcus</taxon>
    </lineage>
</organism>
<gene>
    <name type="primary">fno</name>
    <name type="ordered locus">MJ1501</name>
</gene>
<protein>
    <recommendedName>
        <fullName>F420-dependent NADP reductase</fullName>
        <ecNumber>1.5.1.40</ecNumber>
    </recommendedName>
    <alternativeName>
        <fullName>F420H2:NADP oxidoreductase</fullName>
    </alternativeName>
</protein>
<name>FNO_METJA</name>
<proteinExistence type="inferred from homology"/>
<keyword id="KW-0521">NADP</keyword>
<keyword id="KW-0560">Oxidoreductase</keyword>
<keyword id="KW-1185">Reference proteome</keyword>
<dbReference type="EC" id="1.5.1.40"/>
<dbReference type="EMBL" id="L77117">
    <property type="protein sequence ID" value="AAB99514.1"/>
    <property type="molecule type" value="Genomic_DNA"/>
</dbReference>
<dbReference type="PIR" id="D64487">
    <property type="entry name" value="D64487"/>
</dbReference>
<dbReference type="RefSeq" id="WP_010871024.1">
    <property type="nucleotide sequence ID" value="NC_000909.1"/>
</dbReference>
<dbReference type="SMR" id="Q58896"/>
<dbReference type="STRING" id="243232.MJ_1501"/>
<dbReference type="PaxDb" id="243232-MJ_1501"/>
<dbReference type="EnsemblBacteria" id="AAB99514">
    <property type="protein sequence ID" value="AAB99514"/>
    <property type="gene ID" value="MJ_1501"/>
</dbReference>
<dbReference type="GeneID" id="1452408"/>
<dbReference type="KEGG" id="mja:MJ_1501"/>
<dbReference type="eggNOG" id="arCOG00457">
    <property type="taxonomic scope" value="Archaea"/>
</dbReference>
<dbReference type="HOGENOM" id="CLU_076368_1_0_2"/>
<dbReference type="InParanoid" id="Q58896"/>
<dbReference type="OrthoDB" id="8635at2157"/>
<dbReference type="PhylomeDB" id="Q58896"/>
<dbReference type="Proteomes" id="UP000000805">
    <property type="component" value="Chromosome"/>
</dbReference>
<dbReference type="GO" id="GO:0005886">
    <property type="term" value="C:plasma membrane"/>
    <property type="evidence" value="ECO:0000318"/>
    <property type="project" value="GO_Central"/>
</dbReference>
<dbReference type="GO" id="GO:0102261">
    <property type="term" value="F:8-hydroxy-5-deazaflavin:NADPH oxidoreductase activity"/>
    <property type="evidence" value="ECO:0007669"/>
    <property type="project" value="UniProtKB-EC"/>
</dbReference>
<dbReference type="GO" id="GO:0070967">
    <property type="term" value="F:coenzyme F420 binding"/>
    <property type="evidence" value="ECO:0007669"/>
    <property type="project" value="InterPro"/>
</dbReference>
<dbReference type="GO" id="GO:0008823">
    <property type="term" value="F:cupric reductase (NADH) activity"/>
    <property type="evidence" value="ECO:0000318"/>
    <property type="project" value="GO_Central"/>
</dbReference>
<dbReference type="GO" id="GO:0052851">
    <property type="term" value="F:ferric-chelate reductase (NADPH) activity"/>
    <property type="evidence" value="ECO:0000318"/>
    <property type="project" value="GO_Central"/>
</dbReference>
<dbReference type="GO" id="GO:0050661">
    <property type="term" value="F:NADP binding"/>
    <property type="evidence" value="ECO:0007669"/>
    <property type="project" value="InterPro"/>
</dbReference>
<dbReference type="GO" id="GO:0016651">
    <property type="term" value="F:oxidoreductase activity, acting on NAD(P)H"/>
    <property type="evidence" value="ECO:0007669"/>
    <property type="project" value="InterPro"/>
</dbReference>
<dbReference type="GO" id="GO:0015677">
    <property type="term" value="P:copper ion import"/>
    <property type="evidence" value="ECO:0000318"/>
    <property type="project" value="GO_Central"/>
</dbReference>
<dbReference type="GO" id="GO:0006740">
    <property type="term" value="P:NADPH regeneration"/>
    <property type="evidence" value="ECO:0007669"/>
    <property type="project" value="InterPro"/>
</dbReference>
<dbReference type="FunFam" id="3.40.50.720:FF:000755">
    <property type="entry name" value="F420-dependent NADP reductase"/>
    <property type="match status" value="1"/>
</dbReference>
<dbReference type="Gene3D" id="3.40.50.720">
    <property type="entry name" value="NAD(P)-binding Rossmann-like Domain"/>
    <property type="match status" value="1"/>
</dbReference>
<dbReference type="InterPro" id="IPR036291">
    <property type="entry name" value="NAD(P)-bd_dom_sf"/>
</dbReference>
<dbReference type="InterPro" id="IPR010185">
    <property type="entry name" value="NpdG"/>
</dbReference>
<dbReference type="InterPro" id="IPR028939">
    <property type="entry name" value="P5C_Rdtase_cat_N"/>
</dbReference>
<dbReference type="InterPro" id="IPR051267">
    <property type="entry name" value="STEAP_metalloreductase"/>
</dbReference>
<dbReference type="NCBIfam" id="TIGR01915">
    <property type="entry name" value="npdG"/>
    <property type="match status" value="1"/>
</dbReference>
<dbReference type="PANTHER" id="PTHR14239">
    <property type="entry name" value="DUDULIN-RELATED"/>
    <property type="match status" value="1"/>
</dbReference>
<dbReference type="PANTHER" id="PTHR14239:SF0">
    <property type="entry name" value="F420-DEPENDENT NADP REDUCTASE"/>
    <property type="match status" value="1"/>
</dbReference>
<dbReference type="Pfam" id="PF03807">
    <property type="entry name" value="F420_oxidored"/>
    <property type="match status" value="1"/>
</dbReference>
<dbReference type="SUPFAM" id="SSF51735">
    <property type="entry name" value="NAD(P)-binding Rossmann-fold domains"/>
    <property type="match status" value="1"/>
</dbReference>
<sequence length="223" mass="24068">MKIAILGGTGDQGFGLALRLAKNNKIIIGSRKKEKAEEAAKKAKEILKQRGIEADIIGLENKDAAKEGDVVILSLPYEYTLSTIKQLKEELKGKIVVSIGVPLATAIGDKPTRLLFPPDGSVAEMVQNVLKESKVVSAFQNVCHAVLEDLDNPVDCDILVCGNDEEAKKVVIDLANQIDGVRAIDCGNLEKSRIIEAITPLLIGLNIKYKSKGTGIRITNLEI</sequence>
<reference key="1">
    <citation type="journal article" date="1996" name="Science">
        <title>Complete genome sequence of the methanogenic archaeon, Methanococcus jannaschii.</title>
        <authorList>
            <person name="Bult C.J."/>
            <person name="White O."/>
            <person name="Olsen G.J."/>
            <person name="Zhou L."/>
            <person name="Fleischmann R.D."/>
            <person name="Sutton G.G."/>
            <person name="Blake J.A."/>
            <person name="FitzGerald L.M."/>
            <person name="Clayton R.A."/>
            <person name="Gocayne J.D."/>
            <person name="Kerlavage A.R."/>
            <person name="Dougherty B.A."/>
            <person name="Tomb J.-F."/>
            <person name="Adams M.D."/>
            <person name="Reich C.I."/>
            <person name="Overbeek R."/>
            <person name="Kirkness E.F."/>
            <person name="Weinstock K.G."/>
            <person name="Merrick J.M."/>
            <person name="Glodek A."/>
            <person name="Scott J.L."/>
            <person name="Geoghagen N.S.M."/>
            <person name="Weidman J.F."/>
            <person name="Fuhrmann J.L."/>
            <person name="Nguyen D."/>
            <person name="Utterback T.R."/>
            <person name="Kelley J.M."/>
            <person name="Peterson J.D."/>
            <person name="Sadow P.W."/>
            <person name="Hanna M.C."/>
            <person name="Cotton M.D."/>
            <person name="Roberts K.M."/>
            <person name="Hurst M.A."/>
            <person name="Kaine B.P."/>
            <person name="Borodovsky M."/>
            <person name="Klenk H.-P."/>
            <person name="Fraser C.M."/>
            <person name="Smith H.O."/>
            <person name="Woese C.R."/>
            <person name="Venter J.C."/>
        </authorList>
    </citation>
    <scope>NUCLEOTIDE SEQUENCE [LARGE SCALE GENOMIC DNA]</scope>
    <source>
        <strain>ATCC 43067 / DSM 2661 / JAL-1 / JCM 10045 / NBRC 100440</strain>
    </source>
</reference>
<feature type="chain" id="PRO_0000087152" description="F420-dependent NADP reductase">
    <location>
        <begin position="1"/>
        <end position="223"/>
    </location>
</feature>
<feature type="binding site" evidence="2">
    <location>
        <begin position="9"/>
        <end position="12"/>
    </location>
    <ligand>
        <name>NADP(+)</name>
        <dbReference type="ChEBI" id="CHEBI:58349"/>
    </ligand>
</feature>
<feature type="binding site" evidence="2">
    <location>
        <begin position="30"/>
        <end position="31"/>
    </location>
    <ligand>
        <name>NADP(+)</name>
        <dbReference type="ChEBI" id="CHEBI:58349"/>
    </ligand>
</feature>
<feature type="binding site" evidence="2">
    <location>
        <position position="35"/>
    </location>
    <ligand>
        <name>NADP(+)</name>
        <dbReference type="ChEBI" id="CHEBI:58349"/>
    </ligand>
</feature>
<feature type="binding site" evidence="2">
    <location>
        <position position="75"/>
    </location>
    <ligand>
        <name>NADP(+)</name>
        <dbReference type="ChEBI" id="CHEBI:58349"/>
    </ligand>
</feature>
<feature type="binding site" evidence="2">
    <location>
        <position position="101"/>
    </location>
    <ligand>
        <name>NADP(+)</name>
        <dbReference type="ChEBI" id="CHEBI:58349"/>
    </ligand>
</feature>